<keyword id="KW-0010">Activator</keyword>
<keyword id="KW-0131">Cell cycle</keyword>
<keyword id="KW-0132">Cell division</keyword>
<keyword id="KW-0498">Mitosis</keyword>
<keyword id="KW-0539">Nucleus</keyword>
<keyword id="KW-0597">Phosphoprotein</keyword>
<keyword id="KW-0346">Stress response</keyword>
<keyword id="KW-0804">Transcription</keyword>
<keyword id="KW-0805">Transcription regulation</keyword>
<name>POG1_YEAS7</name>
<protein>
    <recommendedName>
        <fullName>Transcriptional activator POG1</fullName>
    </recommendedName>
    <alternativeName>
        <fullName>Promoter of growth protein 1</fullName>
    </alternativeName>
</protein>
<evidence type="ECO:0000250" key="1"/>
<evidence type="ECO:0000250" key="2">
    <source>
        <dbReference type="UniProtKB" id="P40473"/>
    </source>
</evidence>
<evidence type="ECO:0000256" key="3">
    <source>
        <dbReference type="SAM" id="MobiDB-lite"/>
    </source>
</evidence>
<evidence type="ECO:0000305" key="4"/>
<feature type="chain" id="PRO_0000333400" description="Transcriptional activator POG1">
    <location>
        <begin position="1"/>
        <end position="351"/>
    </location>
</feature>
<feature type="region of interest" description="Disordered" evidence="3">
    <location>
        <begin position="1"/>
        <end position="56"/>
    </location>
</feature>
<feature type="region of interest" description="Disordered" evidence="3">
    <location>
        <begin position="237"/>
        <end position="256"/>
    </location>
</feature>
<feature type="region of interest" description="Disordered" evidence="3">
    <location>
        <begin position="280"/>
        <end position="351"/>
    </location>
</feature>
<feature type="compositionally biased region" description="Basic and acidic residues" evidence="3">
    <location>
        <begin position="1"/>
        <end position="27"/>
    </location>
</feature>
<feature type="compositionally biased region" description="Polar residues" evidence="3">
    <location>
        <begin position="28"/>
        <end position="56"/>
    </location>
</feature>
<feature type="compositionally biased region" description="Polar residues" evidence="3">
    <location>
        <begin position="241"/>
        <end position="256"/>
    </location>
</feature>
<feature type="compositionally biased region" description="Polar residues" evidence="3">
    <location>
        <begin position="287"/>
        <end position="296"/>
    </location>
</feature>
<feature type="modified residue" description="Phosphoserine" evidence="2">
    <location>
        <position position="152"/>
    </location>
</feature>
<feature type="modified residue" description="Phosphoserine" evidence="2">
    <location>
        <position position="168"/>
    </location>
</feature>
<feature type="modified residue" description="Phosphoserine" evidence="2">
    <location>
        <position position="314"/>
    </location>
</feature>
<accession>A6ZVF4</accession>
<gene>
    <name type="primary">POG1</name>
    <name type="ORF">SCY_2670</name>
</gene>
<sequence length="351" mass="39523">MKQEPHRQSEEKEKPKGPMAVEREHHTSLSSGTTMTASTGDESTNSRPVESSQTEKSLSLRIRILKQLGFDDIQELNACDTGLVEQFLNVRLINDTKELEKIRESNLAKLNQIIDKCMESDKISDSTLNKILDMSMNRDTNNDNNNHLTIPSPITTKKRKINASELASPRGHRRYRSDIPTVSEVETGVGYPQIHQQPGAYTLPMPANQWMSNPYMQPPQPQVQQIMPQYLYPPGMGPQAQLPTMSSNSESQTPVMSSQFLSLNQHGLYQQNIGAHPVMSMGPQANIYGQQHQPQPGQERDQSRKSFSHRRSQSANISMANFRSPMRNPQPASSQRPVNFLIHTPKHPPPT</sequence>
<organism>
    <name type="scientific">Saccharomyces cerevisiae (strain YJM789)</name>
    <name type="common">Baker's yeast</name>
    <dbReference type="NCBI Taxonomy" id="307796"/>
    <lineage>
        <taxon>Eukaryota</taxon>
        <taxon>Fungi</taxon>
        <taxon>Dikarya</taxon>
        <taxon>Ascomycota</taxon>
        <taxon>Saccharomycotina</taxon>
        <taxon>Saccharomycetes</taxon>
        <taxon>Saccharomycetales</taxon>
        <taxon>Saccharomycetaceae</taxon>
        <taxon>Saccharomyces</taxon>
    </lineage>
</organism>
<comment type="function">
    <text evidence="1">Transcriptional activator which promotes cell cycle recovery with CLN2, after pheromone induced G1 arrest, probably inhibiting the ability of STE20 to activate the pheromone response pathway. Binds the promoters of genes that function in cell cycle regulation, cytoskeletal organization, and spindle assembly. May also be involved in stress-resistance (By similarity).</text>
</comment>
<comment type="subcellular location">
    <subcellularLocation>
        <location evidence="1">Nucleus</location>
    </subcellularLocation>
</comment>
<comment type="induction">
    <text evidence="1">Expressed periodically during cell division. Regulated by the SBF complex which is one critical regulator of the start of the cell cycle (By similarity).</text>
</comment>
<comment type="PTM">
    <text evidence="4">Phosphorylated by CDC28.</text>
</comment>
<comment type="similarity">
    <text evidence="4">Belongs to the POG1 family.</text>
</comment>
<reference key="1">
    <citation type="journal article" date="2007" name="Proc. Natl. Acad. Sci. U.S.A.">
        <title>Genome sequencing and comparative analysis of Saccharomyces cerevisiae strain YJM789.</title>
        <authorList>
            <person name="Wei W."/>
            <person name="McCusker J.H."/>
            <person name="Hyman R.W."/>
            <person name="Jones T."/>
            <person name="Ning Y."/>
            <person name="Cao Z."/>
            <person name="Gu Z."/>
            <person name="Bruno D."/>
            <person name="Miranda M."/>
            <person name="Nguyen M."/>
            <person name="Wilhelmy J."/>
            <person name="Komp C."/>
            <person name="Tamse R."/>
            <person name="Wang X."/>
            <person name="Jia P."/>
            <person name="Luedi P."/>
            <person name="Oefner P.J."/>
            <person name="David L."/>
            <person name="Dietrich F.S."/>
            <person name="Li Y."/>
            <person name="Davis R.W."/>
            <person name="Steinmetz L.M."/>
        </authorList>
    </citation>
    <scope>NUCLEOTIDE SEQUENCE [LARGE SCALE GENOMIC DNA]</scope>
    <source>
        <strain>YJM789</strain>
    </source>
</reference>
<dbReference type="EMBL" id="AAFW02000124">
    <property type="protein sequence ID" value="EDN61379.1"/>
    <property type="molecule type" value="Genomic_DNA"/>
</dbReference>
<dbReference type="HOGENOM" id="CLU_792700_0_0_1"/>
<dbReference type="Proteomes" id="UP000007060">
    <property type="component" value="Unassembled WGS sequence"/>
</dbReference>
<dbReference type="GO" id="GO:0005634">
    <property type="term" value="C:nucleus"/>
    <property type="evidence" value="ECO:0007669"/>
    <property type="project" value="UniProtKB-SubCell"/>
</dbReference>
<dbReference type="GO" id="GO:0051301">
    <property type="term" value="P:cell division"/>
    <property type="evidence" value="ECO:0007669"/>
    <property type="project" value="UniProtKB-KW"/>
</dbReference>
<proteinExistence type="inferred from homology"/>